<feature type="chain" id="PRO_0000094714" description="Holliday junction branch migration complex subunit RuvA">
    <location>
        <begin position="1"/>
        <end position="194"/>
    </location>
</feature>
<feature type="region of interest" description="Domain I" evidence="1">
    <location>
        <begin position="1"/>
        <end position="64"/>
    </location>
</feature>
<feature type="region of interest" description="Domain II" evidence="1">
    <location>
        <begin position="65"/>
        <end position="140"/>
    </location>
</feature>
<feature type="region of interest" description="Flexible linker" evidence="1">
    <location>
        <begin position="140"/>
        <end position="144"/>
    </location>
</feature>
<feature type="region of interest" description="Domain III" evidence="1">
    <location>
        <begin position="145"/>
        <end position="194"/>
    </location>
</feature>
<keyword id="KW-0963">Cytoplasm</keyword>
<keyword id="KW-0227">DNA damage</keyword>
<keyword id="KW-0233">DNA recombination</keyword>
<keyword id="KW-0234">DNA repair</keyword>
<keyword id="KW-0238">DNA-binding</keyword>
<reference key="1">
    <citation type="journal article" date="2000" name="Nature">
        <title>The genome sequence of the plant pathogen Xylella fastidiosa.</title>
        <authorList>
            <person name="Simpson A.J.G."/>
            <person name="Reinach F.C."/>
            <person name="Arruda P."/>
            <person name="Abreu F.A."/>
            <person name="Acencio M."/>
            <person name="Alvarenga R."/>
            <person name="Alves L.M.C."/>
            <person name="Araya J.E."/>
            <person name="Baia G.S."/>
            <person name="Baptista C.S."/>
            <person name="Barros M.H."/>
            <person name="Bonaccorsi E.D."/>
            <person name="Bordin S."/>
            <person name="Bove J.M."/>
            <person name="Briones M.R.S."/>
            <person name="Bueno M.R.P."/>
            <person name="Camargo A.A."/>
            <person name="Camargo L.E.A."/>
            <person name="Carraro D.M."/>
            <person name="Carrer H."/>
            <person name="Colauto N.B."/>
            <person name="Colombo C."/>
            <person name="Costa F.F."/>
            <person name="Costa M.C.R."/>
            <person name="Costa-Neto C.M."/>
            <person name="Coutinho L.L."/>
            <person name="Cristofani M."/>
            <person name="Dias-Neto E."/>
            <person name="Docena C."/>
            <person name="El-Dorry H."/>
            <person name="Facincani A.P."/>
            <person name="Ferreira A.J.S."/>
            <person name="Ferreira V.C.A."/>
            <person name="Ferro J.A."/>
            <person name="Fraga J.S."/>
            <person name="Franca S.C."/>
            <person name="Franco M.C."/>
            <person name="Frohme M."/>
            <person name="Furlan L.R."/>
            <person name="Garnier M."/>
            <person name="Goldman G.H."/>
            <person name="Goldman M.H.S."/>
            <person name="Gomes S.L."/>
            <person name="Gruber A."/>
            <person name="Ho P.L."/>
            <person name="Hoheisel J.D."/>
            <person name="Junqueira M.L."/>
            <person name="Kemper E.L."/>
            <person name="Kitajima J.P."/>
            <person name="Krieger J.E."/>
            <person name="Kuramae E.E."/>
            <person name="Laigret F."/>
            <person name="Lambais M.R."/>
            <person name="Leite L.C.C."/>
            <person name="Lemos E.G.M."/>
            <person name="Lemos M.V.F."/>
            <person name="Lopes S.A."/>
            <person name="Lopes C.R."/>
            <person name="Machado J.A."/>
            <person name="Machado M.A."/>
            <person name="Madeira A.M.B.N."/>
            <person name="Madeira H.M.F."/>
            <person name="Marino C.L."/>
            <person name="Marques M.V."/>
            <person name="Martins E.A.L."/>
            <person name="Martins E.M.F."/>
            <person name="Matsukuma A.Y."/>
            <person name="Menck C.F.M."/>
            <person name="Miracca E.C."/>
            <person name="Miyaki C.Y."/>
            <person name="Monteiro-Vitorello C.B."/>
            <person name="Moon D.H."/>
            <person name="Nagai M.A."/>
            <person name="Nascimento A.L.T.O."/>
            <person name="Netto L.E.S."/>
            <person name="Nhani A. Jr."/>
            <person name="Nobrega F.G."/>
            <person name="Nunes L.R."/>
            <person name="Oliveira M.A."/>
            <person name="de Oliveira M.C."/>
            <person name="de Oliveira R.C."/>
            <person name="Palmieri D.A."/>
            <person name="Paris A."/>
            <person name="Peixoto B.R."/>
            <person name="Pereira G.A.G."/>
            <person name="Pereira H.A. Jr."/>
            <person name="Pesquero J.B."/>
            <person name="Quaggio R.B."/>
            <person name="Roberto P.G."/>
            <person name="Rodrigues V."/>
            <person name="de Rosa A.J.M."/>
            <person name="de Rosa V.E. Jr."/>
            <person name="de Sa R.G."/>
            <person name="Santelli R.V."/>
            <person name="Sawasaki H.E."/>
            <person name="da Silva A.C.R."/>
            <person name="da Silva A.M."/>
            <person name="da Silva F.R."/>
            <person name="Silva W.A. Jr."/>
            <person name="da Silveira J.F."/>
            <person name="Silvestri M.L.Z."/>
            <person name="Siqueira W.J."/>
            <person name="de Souza A.A."/>
            <person name="de Souza A.P."/>
            <person name="Terenzi M.F."/>
            <person name="Truffi D."/>
            <person name="Tsai S.M."/>
            <person name="Tsuhako M.H."/>
            <person name="Vallada H."/>
            <person name="Van Sluys M.A."/>
            <person name="Verjovski-Almeida S."/>
            <person name="Vettore A.L."/>
            <person name="Zago M.A."/>
            <person name="Zatz M."/>
            <person name="Meidanis J."/>
            <person name="Setubal J.C."/>
        </authorList>
    </citation>
    <scope>NUCLEOTIDE SEQUENCE [LARGE SCALE GENOMIC DNA]</scope>
    <source>
        <strain>9a5c</strain>
    </source>
</reference>
<proteinExistence type="inferred from homology"/>
<comment type="function">
    <text evidence="1">The RuvA-RuvB-RuvC complex processes Holliday junction (HJ) DNA during genetic recombination and DNA repair, while the RuvA-RuvB complex plays an important role in the rescue of blocked DNA replication forks via replication fork reversal (RFR). RuvA specifically binds to HJ cruciform DNA, conferring on it an open structure. The RuvB hexamer acts as an ATP-dependent pump, pulling dsDNA into and through the RuvAB complex. HJ branch migration allows RuvC to scan DNA until it finds its consensus sequence, where it cleaves and resolves the cruciform DNA.</text>
</comment>
<comment type="subunit">
    <text evidence="1">Homotetramer. Forms an RuvA(8)-RuvB(12)-Holliday junction (HJ) complex. HJ DNA is sandwiched between 2 RuvA tetramers; dsDNA enters through RuvA and exits via RuvB. An RuvB hexamer assembles on each DNA strand where it exits the tetramer. Each RuvB hexamer is contacted by two RuvA subunits (via domain III) on 2 adjacent RuvB subunits; this complex drives branch migration. In the full resolvosome a probable DNA-RuvA(4)-RuvB(12)-RuvC(2) complex forms which resolves the HJ.</text>
</comment>
<comment type="subcellular location">
    <subcellularLocation>
        <location evidence="1">Cytoplasm</location>
    </subcellularLocation>
</comment>
<comment type="domain">
    <text evidence="1">Has three domains with a flexible linker between the domains II and III and assumes an 'L' shape. Domain III is highly mobile and contacts RuvB.</text>
</comment>
<comment type="similarity">
    <text evidence="1">Belongs to the RuvA family.</text>
</comment>
<gene>
    <name evidence="1" type="primary">ruvA</name>
    <name type="ordered locus">XF_1904</name>
</gene>
<name>RUVA_XYLFA</name>
<organism>
    <name type="scientific">Xylella fastidiosa (strain 9a5c)</name>
    <dbReference type="NCBI Taxonomy" id="160492"/>
    <lineage>
        <taxon>Bacteria</taxon>
        <taxon>Pseudomonadati</taxon>
        <taxon>Pseudomonadota</taxon>
        <taxon>Gammaproteobacteria</taxon>
        <taxon>Lysobacterales</taxon>
        <taxon>Lysobacteraceae</taxon>
        <taxon>Xylella</taxon>
    </lineage>
</organism>
<evidence type="ECO:0000255" key="1">
    <source>
        <dbReference type="HAMAP-Rule" id="MF_00031"/>
    </source>
</evidence>
<sequence length="194" mass="20920">MIGRLRGVLTSKTPPWLVVDVCGVGYELEVPMSTFYELPNVGYEVNLFTHYTQKDDSAALYGFLSESERRLFRHLQRVSGIGTKIALAVLSSVSVDTFAGLIQAGDVNALTVIPGIGKKTAERMLVELRDRAADFNNGISTSGKLNLDTVSEAALALQQLGYKPAEAARMARDAGTESDDVASVIKKALQAALR</sequence>
<dbReference type="EMBL" id="AE003849">
    <property type="protein sequence ID" value="AAF84710.1"/>
    <property type="molecule type" value="Genomic_DNA"/>
</dbReference>
<dbReference type="PIR" id="G82623">
    <property type="entry name" value="G82623"/>
</dbReference>
<dbReference type="RefSeq" id="WP_010894370.1">
    <property type="nucleotide sequence ID" value="NC_002488.3"/>
</dbReference>
<dbReference type="SMR" id="Q9PC77"/>
<dbReference type="STRING" id="160492.XF_1904"/>
<dbReference type="KEGG" id="xfa:XF_1904"/>
<dbReference type="eggNOG" id="COG0632">
    <property type="taxonomic scope" value="Bacteria"/>
</dbReference>
<dbReference type="HOGENOM" id="CLU_087936_0_0_6"/>
<dbReference type="Proteomes" id="UP000000812">
    <property type="component" value="Chromosome"/>
</dbReference>
<dbReference type="GO" id="GO:0005737">
    <property type="term" value="C:cytoplasm"/>
    <property type="evidence" value="ECO:0007669"/>
    <property type="project" value="UniProtKB-SubCell"/>
</dbReference>
<dbReference type="GO" id="GO:0009379">
    <property type="term" value="C:Holliday junction helicase complex"/>
    <property type="evidence" value="ECO:0007669"/>
    <property type="project" value="InterPro"/>
</dbReference>
<dbReference type="GO" id="GO:0048476">
    <property type="term" value="C:Holliday junction resolvase complex"/>
    <property type="evidence" value="ECO:0007669"/>
    <property type="project" value="UniProtKB-UniRule"/>
</dbReference>
<dbReference type="GO" id="GO:0005524">
    <property type="term" value="F:ATP binding"/>
    <property type="evidence" value="ECO:0007669"/>
    <property type="project" value="InterPro"/>
</dbReference>
<dbReference type="GO" id="GO:0000400">
    <property type="term" value="F:four-way junction DNA binding"/>
    <property type="evidence" value="ECO:0007669"/>
    <property type="project" value="UniProtKB-UniRule"/>
</dbReference>
<dbReference type="GO" id="GO:0009378">
    <property type="term" value="F:four-way junction helicase activity"/>
    <property type="evidence" value="ECO:0007669"/>
    <property type="project" value="InterPro"/>
</dbReference>
<dbReference type="GO" id="GO:0006310">
    <property type="term" value="P:DNA recombination"/>
    <property type="evidence" value="ECO:0007669"/>
    <property type="project" value="UniProtKB-UniRule"/>
</dbReference>
<dbReference type="GO" id="GO:0006281">
    <property type="term" value="P:DNA repair"/>
    <property type="evidence" value="ECO:0007669"/>
    <property type="project" value="UniProtKB-UniRule"/>
</dbReference>
<dbReference type="CDD" id="cd14332">
    <property type="entry name" value="UBA_RuvA_C"/>
    <property type="match status" value="1"/>
</dbReference>
<dbReference type="Gene3D" id="1.10.150.20">
    <property type="entry name" value="5' to 3' exonuclease, C-terminal subdomain"/>
    <property type="match status" value="1"/>
</dbReference>
<dbReference type="Gene3D" id="1.10.8.10">
    <property type="entry name" value="DNA helicase RuvA subunit, C-terminal domain"/>
    <property type="match status" value="1"/>
</dbReference>
<dbReference type="Gene3D" id="2.40.50.140">
    <property type="entry name" value="Nucleic acid-binding proteins"/>
    <property type="match status" value="1"/>
</dbReference>
<dbReference type="HAMAP" id="MF_00031">
    <property type="entry name" value="DNA_HJ_migration_RuvA"/>
    <property type="match status" value="1"/>
</dbReference>
<dbReference type="InterPro" id="IPR013849">
    <property type="entry name" value="DNA_helicase_Holl-junc_RuvA_I"/>
</dbReference>
<dbReference type="InterPro" id="IPR003583">
    <property type="entry name" value="Hlx-hairpin-Hlx_DNA-bd_motif"/>
</dbReference>
<dbReference type="InterPro" id="IPR012340">
    <property type="entry name" value="NA-bd_OB-fold"/>
</dbReference>
<dbReference type="InterPro" id="IPR000085">
    <property type="entry name" value="RuvA"/>
</dbReference>
<dbReference type="InterPro" id="IPR010994">
    <property type="entry name" value="RuvA_2-like"/>
</dbReference>
<dbReference type="InterPro" id="IPR011114">
    <property type="entry name" value="RuvA_C"/>
</dbReference>
<dbReference type="InterPro" id="IPR036267">
    <property type="entry name" value="RuvA_C_sf"/>
</dbReference>
<dbReference type="NCBIfam" id="TIGR00084">
    <property type="entry name" value="ruvA"/>
    <property type="match status" value="1"/>
</dbReference>
<dbReference type="Pfam" id="PF14520">
    <property type="entry name" value="HHH_5"/>
    <property type="match status" value="1"/>
</dbReference>
<dbReference type="Pfam" id="PF07499">
    <property type="entry name" value="RuvA_C"/>
    <property type="match status" value="1"/>
</dbReference>
<dbReference type="Pfam" id="PF01330">
    <property type="entry name" value="RuvA_N"/>
    <property type="match status" value="1"/>
</dbReference>
<dbReference type="SMART" id="SM00278">
    <property type="entry name" value="HhH1"/>
    <property type="match status" value="2"/>
</dbReference>
<dbReference type="SUPFAM" id="SSF46929">
    <property type="entry name" value="DNA helicase RuvA subunit, C-terminal domain"/>
    <property type="match status" value="1"/>
</dbReference>
<dbReference type="SUPFAM" id="SSF50249">
    <property type="entry name" value="Nucleic acid-binding proteins"/>
    <property type="match status" value="1"/>
</dbReference>
<dbReference type="SUPFAM" id="SSF47781">
    <property type="entry name" value="RuvA domain 2-like"/>
    <property type="match status" value="1"/>
</dbReference>
<protein>
    <recommendedName>
        <fullName evidence="1">Holliday junction branch migration complex subunit RuvA</fullName>
    </recommendedName>
</protein>
<accession>Q9PC77</accession>